<feature type="chain" id="PRO_0000215418" description="Phenylalanine ammonia-lyase 1">
    <location>
        <begin position="1"/>
        <end position="710"/>
    </location>
</feature>
<feature type="active site" description="Proton donor/acceptor" evidence="3">
    <location>
        <position position="102"/>
    </location>
</feature>
<feature type="binding site" evidence="3">
    <location>
        <position position="254"/>
    </location>
    <ligand>
        <name>(E)-cinnamate</name>
        <dbReference type="ChEBI" id="CHEBI:15669"/>
    </ligand>
</feature>
<feature type="binding site" evidence="3">
    <location>
        <position position="342"/>
    </location>
    <ligand>
        <name>(E)-cinnamate</name>
        <dbReference type="ChEBI" id="CHEBI:15669"/>
    </ligand>
</feature>
<feature type="binding site" evidence="3">
    <location>
        <position position="348"/>
    </location>
    <ligand>
        <name>(E)-cinnamate</name>
        <dbReference type="ChEBI" id="CHEBI:15669"/>
    </ligand>
</feature>
<feature type="binding site" evidence="3">
    <location>
        <position position="378"/>
    </location>
    <ligand>
        <name>(E)-cinnamate</name>
        <dbReference type="ChEBI" id="CHEBI:15669"/>
    </ligand>
</feature>
<feature type="binding site" evidence="1">
    <location>
        <position position="450"/>
    </location>
    <ligand>
        <name>(E)-cinnamate</name>
        <dbReference type="ChEBI" id="CHEBI:15669"/>
    </ligand>
</feature>
<feature type="binding site" evidence="1">
    <location>
        <position position="478"/>
    </location>
    <ligand>
        <name>(E)-cinnamate</name>
        <dbReference type="ChEBI" id="CHEBI:15669"/>
    </ligand>
</feature>
<feature type="binding site" evidence="3">
    <location>
        <position position="481"/>
    </location>
    <ligand>
        <name>(E)-cinnamate</name>
        <dbReference type="ChEBI" id="CHEBI:15669"/>
    </ligand>
</feature>
<feature type="modified residue" description="2,3-didehydroalanine (Ser)" evidence="4">
    <location>
        <position position="197"/>
    </location>
</feature>
<feature type="cross-link" description="5-imidazolinone (Ala-Gly)" evidence="3">
    <location>
        <begin position="196"/>
        <end position="198"/>
    </location>
</feature>
<organism>
    <name type="scientific">Rubus idaeus</name>
    <name type="common">Raspberry</name>
    <dbReference type="NCBI Taxonomy" id="32247"/>
    <lineage>
        <taxon>Eukaryota</taxon>
        <taxon>Viridiplantae</taxon>
        <taxon>Streptophyta</taxon>
        <taxon>Embryophyta</taxon>
        <taxon>Tracheophyta</taxon>
        <taxon>Spermatophyta</taxon>
        <taxon>Magnoliopsida</taxon>
        <taxon>eudicotyledons</taxon>
        <taxon>Gunneridae</taxon>
        <taxon>Pentapetalae</taxon>
        <taxon>rosids</taxon>
        <taxon>fabids</taxon>
        <taxon>Rosales</taxon>
        <taxon>Rosaceae</taxon>
        <taxon>Rosoideae</taxon>
        <taxon>Rosoideae incertae sedis</taxon>
        <taxon>Rubus</taxon>
    </lineage>
</organism>
<sequence>MEFYKNGNGAVESFCEGHDPLNWNMAAESLKGSHVDELKRMVSDYRKPVVKLGGETLTIGQVAAIASHDGGVRVELSEEKRAGVKASSDWVMDSMGKGTDSYGVTTGFGATSHRRTKNGGALQRELIRFLNAGIFGSSLDSTHKLPHTATRAAMLVRFNTLLQGYSGIRFEILEAITKFLNGNITPCLPLRGTITASGDLVPLSYIAGLLIGRPNSKSVGPKGETLSPAEGFKLAGIDGGFFELQPKEGLALVNGTAVGSGMASMVLFDANTLAVLSEVMSAIFAEVMQGKPEFTDHLTHKLKHHPGQIEAAAIMEHILEGSSYVKEAKKVHEMDPLQKPKQDRYALRTSPQWLGPQIEVIRAATKMIEREINSVNDNPLIDVSRNKALHGGNFQELPIGVAMDNTRLAIASIGKLIFAQFSELVNDYYNNGLPSILTGSSNPSLDYGFKGAEIAMASYCSELQFLANPVTNHVQSAEQHNQDVNSLGLISSRKTSEAVDILKLMSSTFLVALCQAIDLRHLEENLKIVVKTTVSNVAKRTLTVSPNGELHPSRFSEKDLLTVVDREYLFSYIDDPCLATYPLMQKLRAELVEHALKNGERERSANTSIFHKIAAFEEELKTILPKEVDNARIEIENGKSEIPNRIKECRSYPLYRFVREELGTSLLTGEKIKSPGEECYKVFNAICAGKLVDPLLECLKEWNGAPLPIS</sequence>
<protein>
    <recommendedName>
        <fullName>Phenylalanine ammonia-lyase 1</fullName>
        <ecNumber evidence="2">4.3.1.24</ecNumber>
    </recommendedName>
    <alternativeName>
        <fullName>RiPAL1</fullName>
    </alternativeName>
</protein>
<name>PAL1_RUBID</name>
<accession>Q9M568</accession>
<evidence type="ECO:0000250" key="1">
    <source>
        <dbReference type="UniProtKB" id="P11544"/>
    </source>
</evidence>
<evidence type="ECO:0000250" key="2">
    <source>
        <dbReference type="UniProtKB" id="P24481"/>
    </source>
</evidence>
<evidence type="ECO:0000250" key="3">
    <source>
        <dbReference type="UniProtKB" id="Q68G84"/>
    </source>
</evidence>
<evidence type="ECO:0000255" key="4">
    <source>
        <dbReference type="PROSITE-ProRule" id="PRU10122"/>
    </source>
</evidence>
<evidence type="ECO:0000305" key="5"/>
<proteinExistence type="evidence at transcript level"/>
<reference key="1">
    <citation type="journal article" date="2001" name="Plant Physiol.">
        <title>The phenylalanine ammonia-lyase gene family in raspberry. Structure, expression, and evolution.</title>
        <authorList>
            <person name="Kumar A."/>
            <person name="Ellis B.E."/>
        </authorList>
    </citation>
    <scope>NUCLEOTIDE SEQUENCE [MRNA]</scope>
    <source>
        <tissue>Fruit</tissue>
    </source>
</reference>
<gene>
    <name type="primary">PAL1</name>
</gene>
<keyword id="KW-0963">Cytoplasm</keyword>
<keyword id="KW-0456">Lyase</keyword>
<keyword id="KW-0585">Phenylalanine catabolism</keyword>
<keyword id="KW-0587">Phenylpropanoid metabolism</keyword>
<comment type="function">
    <text evidence="2">This is a key enzyme of plant metabolism catalyzing the first reaction in the biosynthesis from L-phenylalanine of a wide variety of natural products based on the phenylpropane skeleton.</text>
</comment>
<comment type="catalytic activity">
    <reaction evidence="2">
        <text>L-phenylalanine = (E)-cinnamate + NH4(+)</text>
        <dbReference type="Rhea" id="RHEA:21384"/>
        <dbReference type="ChEBI" id="CHEBI:15669"/>
        <dbReference type="ChEBI" id="CHEBI:28938"/>
        <dbReference type="ChEBI" id="CHEBI:58095"/>
        <dbReference type="EC" id="4.3.1.24"/>
    </reaction>
</comment>
<comment type="pathway">
    <text evidence="5">Phenylpropanoid metabolism; trans-cinnamate biosynthesis; trans-cinnamate from L-phenylalanine: step 1/1.</text>
</comment>
<comment type="subunit">
    <text evidence="2">Homotetramer.</text>
</comment>
<comment type="subcellular location">
    <subcellularLocation>
        <location evidence="5">Cytoplasm</location>
    </subcellularLocation>
</comment>
<comment type="developmental stage">
    <text>Early fruit ripening.</text>
</comment>
<comment type="PTM">
    <text evidence="3">Contains an active site 4-methylidene-imidazol-5-one (MIO), which is formed autocatalytically by cyclization and dehydration of residues Ala-Ser-Gly.</text>
</comment>
<comment type="similarity">
    <text evidence="5">Belongs to the PAL/histidase family.</text>
</comment>
<dbReference type="EC" id="4.3.1.24" evidence="2"/>
<dbReference type="EMBL" id="AF237954">
    <property type="protein sequence ID" value="AAF40223.1"/>
    <property type="molecule type" value="mRNA"/>
</dbReference>
<dbReference type="SMR" id="Q9M568"/>
<dbReference type="UniPathway" id="UPA00713">
    <property type="reaction ID" value="UER00725"/>
</dbReference>
<dbReference type="GO" id="GO:0005737">
    <property type="term" value="C:cytoplasm"/>
    <property type="evidence" value="ECO:0007669"/>
    <property type="project" value="UniProtKB-SubCell"/>
</dbReference>
<dbReference type="GO" id="GO:0045548">
    <property type="term" value="F:phenylalanine ammonia-lyase activity"/>
    <property type="evidence" value="ECO:0007669"/>
    <property type="project" value="UniProtKB-EC"/>
</dbReference>
<dbReference type="GO" id="GO:0009800">
    <property type="term" value="P:cinnamic acid biosynthetic process"/>
    <property type="evidence" value="ECO:0007669"/>
    <property type="project" value="UniProtKB-UniPathway"/>
</dbReference>
<dbReference type="GO" id="GO:0006559">
    <property type="term" value="P:L-phenylalanine catabolic process"/>
    <property type="evidence" value="ECO:0007669"/>
    <property type="project" value="UniProtKB-KW"/>
</dbReference>
<dbReference type="CDD" id="cd00332">
    <property type="entry name" value="PAL-HAL"/>
    <property type="match status" value="1"/>
</dbReference>
<dbReference type="FunFam" id="1.10.274.20:FF:000001">
    <property type="entry name" value="Phenylalanine ammonia-lyase"/>
    <property type="match status" value="1"/>
</dbReference>
<dbReference type="FunFam" id="1.10.275.10:FF:000009">
    <property type="entry name" value="Phenylalanine ammonia-lyase"/>
    <property type="match status" value="1"/>
</dbReference>
<dbReference type="FunFam" id="1.20.200.10:FF:000009">
    <property type="entry name" value="Phenylalanine ammonia-lyase"/>
    <property type="match status" value="1"/>
</dbReference>
<dbReference type="Gene3D" id="1.20.200.10">
    <property type="entry name" value="Fumarase/aspartase (Central domain)"/>
    <property type="match status" value="1"/>
</dbReference>
<dbReference type="Gene3D" id="1.10.275.10">
    <property type="entry name" value="Fumarase/aspartase (N-terminal domain)"/>
    <property type="match status" value="1"/>
</dbReference>
<dbReference type="Gene3D" id="1.10.274.20">
    <property type="entry name" value="Phenylalanine ammonia-lyase 1, domain 3"/>
    <property type="match status" value="1"/>
</dbReference>
<dbReference type="InterPro" id="IPR001106">
    <property type="entry name" value="Aromatic_Lyase"/>
</dbReference>
<dbReference type="InterPro" id="IPR024083">
    <property type="entry name" value="Fumarase/histidase_N"/>
</dbReference>
<dbReference type="InterPro" id="IPR008948">
    <property type="entry name" value="L-Aspartase-like"/>
</dbReference>
<dbReference type="InterPro" id="IPR022313">
    <property type="entry name" value="Phe/His_NH3-lyase_AS"/>
</dbReference>
<dbReference type="InterPro" id="IPR005922">
    <property type="entry name" value="Phe_NH3-lyase"/>
</dbReference>
<dbReference type="InterPro" id="IPR023144">
    <property type="entry name" value="Phe_NH3-lyase_shielding_dom_sf"/>
</dbReference>
<dbReference type="NCBIfam" id="TIGR01226">
    <property type="entry name" value="phe_am_lyase"/>
    <property type="match status" value="1"/>
</dbReference>
<dbReference type="PANTHER" id="PTHR10362">
    <property type="entry name" value="HISTIDINE AMMONIA-LYASE"/>
    <property type="match status" value="1"/>
</dbReference>
<dbReference type="Pfam" id="PF00221">
    <property type="entry name" value="Lyase_aromatic"/>
    <property type="match status" value="1"/>
</dbReference>
<dbReference type="SUPFAM" id="SSF48557">
    <property type="entry name" value="L-aspartase-like"/>
    <property type="match status" value="1"/>
</dbReference>
<dbReference type="PROSITE" id="PS00488">
    <property type="entry name" value="PAL_HISTIDASE"/>
    <property type="match status" value="1"/>
</dbReference>